<gene>
    <name evidence="1" type="primary">uvrB</name>
    <name type="ordered locus">Haur_4967</name>
</gene>
<evidence type="ECO:0000255" key="1">
    <source>
        <dbReference type="HAMAP-Rule" id="MF_00204"/>
    </source>
</evidence>
<name>UVRB_HERA2</name>
<keyword id="KW-0067">ATP-binding</keyword>
<keyword id="KW-0963">Cytoplasm</keyword>
<keyword id="KW-0227">DNA damage</keyword>
<keyword id="KW-0228">DNA excision</keyword>
<keyword id="KW-0234">DNA repair</keyword>
<keyword id="KW-0267">Excision nuclease</keyword>
<keyword id="KW-0347">Helicase</keyword>
<keyword id="KW-0378">Hydrolase</keyword>
<keyword id="KW-0547">Nucleotide-binding</keyword>
<keyword id="KW-0742">SOS response</keyword>
<comment type="function">
    <text evidence="1">The UvrABC repair system catalyzes the recognition and processing of DNA lesions. A damage recognition complex composed of 2 UvrA and 2 UvrB subunits scans DNA for abnormalities. Upon binding of the UvrA(2)B(2) complex to a putative damaged site, the DNA wraps around one UvrB monomer. DNA wrap is dependent on ATP binding by UvrB and probably causes local melting of the DNA helix, facilitating insertion of UvrB beta-hairpin between the DNA strands. Then UvrB probes one DNA strand for the presence of a lesion. If a lesion is found the UvrA subunits dissociate and the UvrB-DNA preincision complex is formed. This complex is subsequently bound by UvrC and the second UvrB is released. If no lesion is found, the DNA wraps around the other UvrB subunit that will check the other stand for damage.</text>
</comment>
<comment type="subunit">
    <text evidence="1">Forms a heterotetramer with UvrA during the search for lesions. Interacts with UvrC in an incision complex.</text>
</comment>
<comment type="subcellular location">
    <subcellularLocation>
        <location evidence="1">Cytoplasm</location>
    </subcellularLocation>
</comment>
<comment type="domain">
    <text evidence="1">The beta-hairpin motif is involved in DNA binding.</text>
</comment>
<comment type="similarity">
    <text evidence="1">Belongs to the UvrB family.</text>
</comment>
<sequence>MPPLKVHAPYEPRGDQPQAIAQLVNGLNSGLVHQTLLGATGTGKTHTIARVIEQVQRPTLVMAHNKTLAAQLYAEFKEFFPENAVGYFVSYYDAYTPEAYVPSKDLYIEKEAQINEEIDRLRHEATQALFTRSDVIIVASVSAIYGLGSPTDYGQVALKLKTGEIRNRDKVLRTLIDLQFERNDLDFHRGTFRVRGDTLEIFPANAESAFRIEMWGDEIERMVEVDPLTGEILTQKDHIEVFPAKHFIPNADKMQAAIGDIRLELEQQLAHLEGEGKVLEAARLKQRTLYDLEIMEELGYCSGIENYSRHMDRRSEGQTPWTLLDYFPDDFLLVIDESHISVPQIRGMFNGDRSRKQTLVDFGFRLPSALDNRPLMFDEFSKHVHQAIYVSATPGVYEYQHHEQVVEQIIRPTGLLDPMVEVRRTRGQIDDLLGEIKRRVDTGSRVLVTTLTKRMAEDLTDYLKEMGVRTQYLHSDVDTIERIDILRDLRLGVFDVLVGINLLREGLDLPEVSLVAILDADKAGFLRSESSLVQIIGRAARHIDGTVLMYADTITPAMDYAISETRRRRQIQERYNQQHGIEPKGIVKAVRDLTEGMKKVAEKPAAYQTAANPDSMTKEELFKVINALEKQMKQAAKDLEFEKAALLRDQLTEMRQTLALIDNTALLESVNRKPRAKAAMVVEDTGKRKVKGRSRGKL</sequence>
<proteinExistence type="inferred from homology"/>
<accession>A9B464</accession>
<reference key="1">
    <citation type="journal article" date="2011" name="Stand. Genomic Sci.">
        <title>Complete genome sequence of the filamentous gliding predatory bacterium Herpetosiphon aurantiacus type strain (114-95(T)).</title>
        <authorList>
            <person name="Kiss H."/>
            <person name="Nett M."/>
            <person name="Domin N."/>
            <person name="Martin K."/>
            <person name="Maresca J.A."/>
            <person name="Copeland A."/>
            <person name="Lapidus A."/>
            <person name="Lucas S."/>
            <person name="Berry K.W."/>
            <person name="Glavina Del Rio T."/>
            <person name="Dalin E."/>
            <person name="Tice H."/>
            <person name="Pitluck S."/>
            <person name="Richardson P."/>
            <person name="Bruce D."/>
            <person name="Goodwin L."/>
            <person name="Han C."/>
            <person name="Detter J.C."/>
            <person name="Schmutz J."/>
            <person name="Brettin T."/>
            <person name="Land M."/>
            <person name="Hauser L."/>
            <person name="Kyrpides N.C."/>
            <person name="Ivanova N."/>
            <person name="Goeker M."/>
            <person name="Woyke T."/>
            <person name="Klenk H.P."/>
            <person name="Bryant D.A."/>
        </authorList>
    </citation>
    <scope>NUCLEOTIDE SEQUENCE [LARGE SCALE GENOMIC DNA]</scope>
    <source>
        <strain>ATCC 23779 / DSM 785 / 114-95</strain>
    </source>
</reference>
<organism>
    <name type="scientific">Herpetosiphon aurantiacus (strain ATCC 23779 / DSM 785 / 114-95)</name>
    <dbReference type="NCBI Taxonomy" id="316274"/>
    <lineage>
        <taxon>Bacteria</taxon>
        <taxon>Bacillati</taxon>
        <taxon>Chloroflexota</taxon>
        <taxon>Chloroflexia</taxon>
        <taxon>Herpetosiphonales</taxon>
        <taxon>Herpetosiphonaceae</taxon>
        <taxon>Herpetosiphon</taxon>
    </lineage>
</organism>
<dbReference type="EMBL" id="CP000875">
    <property type="protein sequence ID" value="ABX07597.1"/>
    <property type="molecule type" value="Genomic_DNA"/>
</dbReference>
<dbReference type="SMR" id="A9B464"/>
<dbReference type="FunCoup" id="A9B464">
    <property type="interactions" value="322"/>
</dbReference>
<dbReference type="STRING" id="316274.Haur_4967"/>
<dbReference type="KEGG" id="hau:Haur_4967"/>
<dbReference type="eggNOG" id="COG0556">
    <property type="taxonomic scope" value="Bacteria"/>
</dbReference>
<dbReference type="HOGENOM" id="CLU_009621_2_1_0"/>
<dbReference type="InParanoid" id="A9B464"/>
<dbReference type="Proteomes" id="UP000000787">
    <property type="component" value="Chromosome"/>
</dbReference>
<dbReference type="GO" id="GO:0005737">
    <property type="term" value="C:cytoplasm"/>
    <property type="evidence" value="ECO:0007669"/>
    <property type="project" value="UniProtKB-SubCell"/>
</dbReference>
<dbReference type="GO" id="GO:0009380">
    <property type="term" value="C:excinuclease repair complex"/>
    <property type="evidence" value="ECO:0007669"/>
    <property type="project" value="InterPro"/>
</dbReference>
<dbReference type="GO" id="GO:0005524">
    <property type="term" value="F:ATP binding"/>
    <property type="evidence" value="ECO:0007669"/>
    <property type="project" value="UniProtKB-UniRule"/>
</dbReference>
<dbReference type="GO" id="GO:0016887">
    <property type="term" value="F:ATP hydrolysis activity"/>
    <property type="evidence" value="ECO:0007669"/>
    <property type="project" value="InterPro"/>
</dbReference>
<dbReference type="GO" id="GO:0003677">
    <property type="term" value="F:DNA binding"/>
    <property type="evidence" value="ECO:0007669"/>
    <property type="project" value="UniProtKB-UniRule"/>
</dbReference>
<dbReference type="GO" id="GO:0009381">
    <property type="term" value="F:excinuclease ABC activity"/>
    <property type="evidence" value="ECO:0007669"/>
    <property type="project" value="UniProtKB-UniRule"/>
</dbReference>
<dbReference type="GO" id="GO:0004386">
    <property type="term" value="F:helicase activity"/>
    <property type="evidence" value="ECO:0007669"/>
    <property type="project" value="UniProtKB-KW"/>
</dbReference>
<dbReference type="GO" id="GO:0006289">
    <property type="term" value="P:nucleotide-excision repair"/>
    <property type="evidence" value="ECO:0007669"/>
    <property type="project" value="UniProtKB-UniRule"/>
</dbReference>
<dbReference type="GO" id="GO:0009432">
    <property type="term" value="P:SOS response"/>
    <property type="evidence" value="ECO:0007669"/>
    <property type="project" value="UniProtKB-UniRule"/>
</dbReference>
<dbReference type="CDD" id="cd17916">
    <property type="entry name" value="DEXHc_UvrB"/>
    <property type="match status" value="1"/>
</dbReference>
<dbReference type="CDD" id="cd18790">
    <property type="entry name" value="SF2_C_UvrB"/>
    <property type="match status" value="1"/>
</dbReference>
<dbReference type="Gene3D" id="3.40.50.300">
    <property type="entry name" value="P-loop containing nucleotide triphosphate hydrolases"/>
    <property type="match status" value="3"/>
</dbReference>
<dbReference type="Gene3D" id="4.10.860.10">
    <property type="entry name" value="UVR domain"/>
    <property type="match status" value="1"/>
</dbReference>
<dbReference type="HAMAP" id="MF_00204">
    <property type="entry name" value="UvrB"/>
    <property type="match status" value="1"/>
</dbReference>
<dbReference type="InterPro" id="IPR006935">
    <property type="entry name" value="Helicase/UvrB_N"/>
</dbReference>
<dbReference type="InterPro" id="IPR014001">
    <property type="entry name" value="Helicase_ATP-bd"/>
</dbReference>
<dbReference type="InterPro" id="IPR001650">
    <property type="entry name" value="Helicase_C-like"/>
</dbReference>
<dbReference type="InterPro" id="IPR027417">
    <property type="entry name" value="P-loop_NTPase"/>
</dbReference>
<dbReference type="InterPro" id="IPR001943">
    <property type="entry name" value="UVR_dom"/>
</dbReference>
<dbReference type="InterPro" id="IPR036876">
    <property type="entry name" value="UVR_dom_sf"/>
</dbReference>
<dbReference type="InterPro" id="IPR004807">
    <property type="entry name" value="UvrB"/>
</dbReference>
<dbReference type="InterPro" id="IPR041471">
    <property type="entry name" value="UvrB_inter"/>
</dbReference>
<dbReference type="InterPro" id="IPR024759">
    <property type="entry name" value="UvrB_YAD/RRR_dom"/>
</dbReference>
<dbReference type="NCBIfam" id="NF003673">
    <property type="entry name" value="PRK05298.1"/>
    <property type="match status" value="1"/>
</dbReference>
<dbReference type="NCBIfam" id="TIGR00631">
    <property type="entry name" value="uvrb"/>
    <property type="match status" value="1"/>
</dbReference>
<dbReference type="PANTHER" id="PTHR24029">
    <property type="entry name" value="UVRABC SYSTEM PROTEIN B"/>
    <property type="match status" value="1"/>
</dbReference>
<dbReference type="PANTHER" id="PTHR24029:SF0">
    <property type="entry name" value="UVRABC SYSTEM PROTEIN B"/>
    <property type="match status" value="1"/>
</dbReference>
<dbReference type="Pfam" id="PF00271">
    <property type="entry name" value="Helicase_C"/>
    <property type="match status" value="1"/>
</dbReference>
<dbReference type="Pfam" id="PF04851">
    <property type="entry name" value="ResIII"/>
    <property type="match status" value="1"/>
</dbReference>
<dbReference type="Pfam" id="PF02151">
    <property type="entry name" value="UVR"/>
    <property type="match status" value="1"/>
</dbReference>
<dbReference type="Pfam" id="PF12344">
    <property type="entry name" value="UvrB"/>
    <property type="match status" value="1"/>
</dbReference>
<dbReference type="Pfam" id="PF17757">
    <property type="entry name" value="UvrB_inter"/>
    <property type="match status" value="1"/>
</dbReference>
<dbReference type="SMART" id="SM00487">
    <property type="entry name" value="DEXDc"/>
    <property type="match status" value="1"/>
</dbReference>
<dbReference type="SMART" id="SM00490">
    <property type="entry name" value="HELICc"/>
    <property type="match status" value="1"/>
</dbReference>
<dbReference type="SUPFAM" id="SSF46600">
    <property type="entry name" value="C-terminal UvrC-binding domain of UvrB"/>
    <property type="match status" value="1"/>
</dbReference>
<dbReference type="SUPFAM" id="SSF52540">
    <property type="entry name" value="P-loop containing nucleoside triphosphate hydrolases"/>
    <property type="match status" value="2"/>
</dbReference>
<dbReference type="PROSITE" id="PS51192">
    <property type="entry name" value="HELICASE_ATP_BIND_1"/>
    <property type="match status" value="1"/>
</dbReference>
<dbReference type="PROSITE" id="PS51194">
    <property type="entry name" value="HELICASE_CTER"/>
    <property type="match status" value="1"/>
</dbReference>
<dbReference type="PROSITE" id="PS50151">
    <property type="entry name" value="UVR"/>
    <property type="match status" value="1"/>
</dbReference>
<protein>
    <recommendedName>
        <fullName evidence="1">UvrABC system protein B</fullName>
        <shortName evidence="1">Protein UvrB</shortName>
    </recommendedName>
    <alternativeName>
        <fullName evidence="1">Excinuclease ABC subunit B</fullName>
    </alternativeName>
</protein>
<feature type="chain" id="PRO_1000099553" description="UvrABC system protein B">
    <location>
        <begin position="1"/>
        <end position="698"/>
    </location>
</feature>
<feature type="domain" description="Helicase ATP-binding" evidence="1">
    <location>
        <begin position="25"/>
        <end position="183"/>
    </location>
</feature>
<feature type="domain" description="Helicase C-terminal" evidence="1">
    <location>
        <begin position="428"/>
        <end position="594"/>
    </location>
</feature>
<feature type="domain" description="UVR" evidence="1">
    <location>
        <begin position="622"/>
        <end position="657"/>
    </location>
</feature>
<feature type="short sequence motif" description="Beta-hairpin">
    <location>
        <begin position="91"/>
        <end position="114"/>
    </location>
</feature>
<feature type="binding site" evidence="1">
    <location>
        <begin position="38"/>
        <end position="45"/>
    </location>
    <ligand>
        <name>ATP</name>
        <dbReference type="ChEBI" id="CHEBI:30616"/>
    </ligand>
</feature>